<accession>P0A9D6</accession>
<accession>P05796</accession>
<proteinExistence type="inferred from homology"/>
<sequence>MSCEELEIVWNNIKAEARTLADCEPMLASFYHATLLKHENLGSALSYMLANKLSSPIMPAIAIREVVEEAYAADPEMIASAACDIQAVRTRDPAVDKYSTPLLYLKGFHALQAYRIGHWLWNQGRRALAIFLQNQVSVTFQVDIHPAAKIGRGIMLDHATGIVVGETAVIENDVSILQSVTLGGTGKSGGDRHPKIREGVMIGAGAKILGNIEVGRGAKIGAGSVVLQPVPPHTTAAGVPARIVGKPDSDKPSMDMDQHFNGINHTFEYGDGI</sequence>
<keyword id="KW-0012">Acyltransferase</keyword>
<keyword id="KW-0028">Amino-acid biosynthesis</keyword>
<keyword id="KW-0198">Cysteine biosynthesis</keyword>
<keyword id="KW-0963">Cytoplasm</keyword>
<keyword id="KW-1185">Reference proteome</keyword>
<keyword id="KW-0677">Repeat</keyword>
<keyword id="KW-0808">Transferase</keyword>
<reference key="1">
    <citation type="journal article" date="2001" name="Nature">
        <title>Genome sequence of enterohaemorrhagic Escherichia coli O157:H7.</title>
        <authorList>
            <person name="Perna N.T."/>
            <person name="Plunkett G. III"/>
            <person name="Burland V."/>
            <person name="Mau B."/>
            <person name="Glasner J.D."/>
            <person name="Rose D.J."/>
            <person name="Mayhew G.F."/>
            <person name="Evans P.S."/>
            <person name="Gregor J."/>
            <person name="Kirkpatrick H.A."/>
            <person name="Posfai G."/>
            <person name="Hackett J."/>
            <person name="Klink S."/>
            <person name="Boutin A."/>
            <person name="Shao Y."/>
            <person name="Miller L."/>
            <person name="Grotbeck E.J."/>
            <person name="Davis N.W."/>
            <person name="Lim A."/>
            <person name="Dimalanta E.T."/>
            <person name="Potamousis K."/>
            <person name="Apodaca J."/>
            <person name="Anantharaman T.S."/>
            <person name="Lin J."/>
            <person name="Yen G."/>
            <person name="Schwartz D.C."/>
            <person name="Welch R.A."/>
            <person name="Blattner F.R."/>
        </authorList>
    </citation>
    <scope>NUCLEOTIDE SEQUENCE [LARGE SCALE GENOMIC DNA]</scope>
    <source>
        <strain>O157:H7 / EDL933 / ATCC 700927 / EHEC</strain>
    </source>
</reference>
<reference key="2">
    <citation type="journal article" date="2001" name="DNA Res.">
        <title>Complete genome sequence of enterohemorrhagic Escherichia coli O157:H7 and genomic comparison with a laboratory strain K-12.</title>
        <authorList>
            <person name="Hayashi T."/>
            <person name="Makino K."/>
            <person name="Ohnishi M."/>
            <person name="Kurokawa K."/>
            <person name="Ishii K."/>
            <person name="Yokoyama K."/>
            <person name="Han C.-G."/>
            <person name="Ohtsubo E."/>
            <person name="Nakayama K."/>
            <person name="Murata T."/>
            <person name="Tanaka M."/>
            <person name="Tobe T."/>
            <person name="Iida T."/>
            <person name="Takami H."/>
            <person name="Honda T."/>
            <person name="Sasakawa C."/>
            <person name="Ogasawara N."/>
            <person name="Yasunaga T."/>
            <person name="Kuhara S."/>
            <person name="Shiba T."/>
            <person name="Hattori M."/>
            <person name="Shinagawa H."/>
        </authorList>
    </citation>
    <scope>NUCLEOTIDE SEQUENCE [LARGE SCALE GENOMIC DNA]</scope>
    <source>
        <strain>O157:H7 / Sakai / RIMD 0509952 / EHEC</strain>
    </source>
</reference>
<feature type="chain" id="PRO_0000068670" description="Serine acetyltransferase">
    <location>
        <begin position="1"/>
        <end position="273"/>
    </location>
</feature>
<organism>
    <name type="scientific">Escherichia coli O157:H7</name>
    <dbReference type="NCBI Taxonomy" id="83334"/>
    <lineage>
        <taxon>Bacteria</taxon>
        <taxon>Pseudomonadati</taxon>
        <taxon>Pseudomonadota</taxon>
        <taxon>Gammaproteobacteria</taxon>
        <taxon>Enterobacterales</taxon>
        <taxon>Enterobacteriaceae</taxon>
        <taxon>Escherichia</taxon>
    </lineage>
</organism>
<comment type="catalytic activity">
    <reaction>
        <text>L-serine + acetyl-CoA = O-acetyl-L-serine + CoA</text>
        <dbReference type="Rhea" id="RHEA:24560"/>
        <dbReference type="ChEBI" id="CHEBI:33384"/>
        <dbReference type="ChEBI" id="CHEBI:57287"/>
        <dbReference type="ChEBI" id="CHEBI:57288"/>
        <dbReference type="ChEBI" id="CHEBI:58340"/>
        <dbReference type="EC" id="2.3.1.30"/>
    </reaction>
</comment>
<comment type="pathway">
    <text>Amino-acid biosynthesis; L-cysteine biosynthesis; L-cysteine from L-serine: step 1/2.</text>
</comment>
<comment type="subunit">
    <text evidence="1">Homohexamer. Dimer of a homotrimer (By similarity).</text>
</comment>
<comment type="subcellular location">
    <subcellularLocation>
        <location evidence="2">Cytoplasm</location>
    </subcellularLocation>
</comment>
<comment type="similarity">
    <text evidence="2">Belongs to the transferase hexapeptide repeat family.</text>
</comment>
<gene>
    <name type="primary">cysE</name>
    <name type="ordered locus">Z5034</name>
    <name type="ordered locus">ECs4485</name>
</gene>
<protein>
    <recommendedName>
        <fullName>Serine acetyltransferase</fullName>
        <shortName>SAT</shortName>
        <ecNumber>2.3.1.30</ecNumber>
    </recommendedName>
</protein>
<name>CYSE_ECO57</name>
<evidence type="ECO:0000250" key="1"/>
<evidence type="ECO:0000305" key="2"/>
<dbReference type="EC" id="2.3.1.30"/>
<dbReference type="EMBL" id="AE005174">
    <property type="protein sequence ID" value="AAG58754.1"/>
    <property type="molecule type" value="Genomic_DNA"/>
</dbReference>
<dbReference type="EMBL" id="BA000007">
    <property type="protein sequence ID" value="BAB37908.1"/>
    <property type="molecule type" value="Genomic_DNA"/>
</dbReference>
<dbReference type="PIR" id="E91189">
    <property type="entry name" value="E91189"/>
</dbReference>
<dbReference type="PIR" id="F86036">
    <property type="entry name" value="F86036"/>
</dbReference>
<dbReference type="RefSeq" id="NP_312512.1">
    <property type="nucleotide sequence ID" value="NC_002695.1"/>
</dbReference>
<dbReference type="RefSeq" id="WP_001277561.1">
    <property type="nucleotide sequence ID" value="NZ_VOAI01000021.1"/>
</dbReference>
<dbReference type="SMR" id="P0A9D6"/>
<dbReference type="STRING" id="155864.Z5034"/>
<dbReference type="GeneID" id="915573"/>
<dbReference type="GeneID" id="93778321"/>
<dbReference type="KEGG" id="ece:Z5034"/>
<dbReference type="KEGG" id="ecs:ECs_4485"/>
<dbReference type="PATRIC" id="fig|386585.9.peg.4700"/>
<dbReference type="eggNOG" id="COG1045">
    <property type="taxonomic scope" value="Bacteria"/>
</dbReference>
<dbReference type="HOGENOM" id="CLU_051638_0_1_6"/>
<dbReference type="OMA" id="MPAIALR"/>
<dbReference type="SABIO-RK" id="P0A9D6"/>
<dbReference type="UniPathway" id="UPA00136">
    <property type="reaction ID" value="UER00199"/>
</dbReference>
<dbReference type="Proteomes" id="UP000000558">
    <property type="component" value="Chromosome"/>
</dbReference>
<dbReference type="Proteomes" id="UP000002519">
    <property type="component" value="Chromosome"/>
</dbReference>
<dbReference type="GO" id="GO:0005737">
    <property type="term" value="C:cytoplasm"/>
    <property type="evidence" value="ECO:0007669"/>
    <property type="project" value="UniProtKB-SubCell"/>
</dbReference>
<dbReference type="GO" id="GO:0009001">
    <property type="term" value="F:serine O-acetyltransferase activity"/>
    <property type="evidence" value="ECO:0007669"/>
    <property type="project" value="UniProtKB-EC"/>
</dbReference>
<dbReference type="GO" id="GO:0006535">
    <property type="term" value="P:cysteine biosynthetic process from serine"/>
    <property type="evidence" value="ECO:0007669"/>
    <property type="project" value="InterPro"/>
</dbReference>
<dbReference type="CDD" id="cd03354">
    <property type="entry name" value="LbH_SAT"/>
    <property type="match status" value="1"/>
</dbReference>
<dbReference type="FunFam" id="1.10.3130.10:FF:000001">
    <property type="entry name" value="Acetyltransferase"/>
    <property type="match status" value="1"/>
</dbReference>
<dbReference type="FunFam" id="2.160.10.10:FF:000002">
    <property type="entry name" value="Serine acetyltransferase"/>
    <property type="match status" value="1"/>
</dbReference>
<dbReference type="Gene3D" id="2.160.10.10">
    <property type="entry name" value="Hexapeptide repeat proteins"/>
    <property type="match status" value="1"/>
</dbReference>
<dbReference type="Gene3D" id="1.10.3130.10">
    <property type="entry name" value="serine acetyltransferase, domain 1"/>
    <property type="match status" value="1"/>
</dbReference>
<dbReference type="InterPro" id="IPR001451">
    <property type="entry name" value="Hexapep"/>
</dbReference>
<dbReference type="InterPro" id="IPR018357">
    <property type="entry name" value="Hexapep_transf_CS"/>
</dbReference>
<dbReference type="InterPro" id="IPR045304">
    <property type="entry name" value="LbH_SAT"/>
</dbReference>
<dbReference type="InterPro" id="IPR010493">
    <property type="entry name" value="Ser_AcTrfase_N"/>
</dbReference>
<dbReference type="InterPro" id="IPR042122">
    <property type="entry name" value="Ser_AcTrfase_N_sf"/>
</dbReference>
<dbReference type="InterPro" id="IPR005881">
    <property type="entry name" value="Ser_O-AcTrfase"/>
</dbReference>
<dbReference type="InterPro" id="IPR053376">
    <property type="entry name" value="Serine_acetyltransferase"/>
</dbReference>
<dbReference type="InterPro" id="IPR011004">
    <property type="entry name" value="Trimer_LpxA-like_sf"/>
</dbReference>
<dbReference type="NCBIfam" id="TIGR01172">
    <property type="entry name" value="cysE"/>
    <property type="match status" value="1"/>
</dbReference>
<dbReference type="NCBIfam" id="NF041874">
    <property type="entry name" value="EPS_EpsC"/>
    <property type="match status" value="1"/>
</dbReference>
<dbReference type="NCBIfam" id="NF008349">
    <property type="entry name" value="PRK11132.1"/>
    <property type="match status" value="1"/>
</dbReference>
<dbReference type="PANTHER" id="PTHR42811">
    <property type="entry name" value="SERINE ACETYLTRANSFERASE"/>
    <property type="match status" value="1"/>
</dbReference>
<dbReference type="Pfam" id="PF00132">
    <property type="entry name" value="Hexapep"/>
    <property type="match status" value="1"/>
</dbReference>
<dbReference type="Pfam" id="PF06426">
    <property type="entry name" value="SATase_N"/>
    <property type="match status" value="1"/>
</dbReference>
<dbReference type="SMART" id="SM00971">
    <property type="entry name" value="SATase_N"/>
    <property type="match status" value="1"/>
</dbReference>
<dbReference type="SUPFAM" id="SSF51161">
    <property type="entry name" value="Trimeric LpxA-like enzymes"/>
    <property type="match status" value="1"/>
</dbReference>
<dbReference type="PROSITE" id="PS00101">
    <property type="entry name" value="HEXAPEP_TRANSFERASES"/>
    <property type="match status" value="1"/>
</dbReference>